<reference key="1">
    <citation type="journal article" date="2002" name="Proc. Natl. Acad. Sci. U.S.A.">
        <title>Extensive mosaic structure revealed by the complete genome sequence of uropathogenic Escherichia coli.</title>
        <authorList>
            <person name="Welch R.A."/>
            <person name="Burland V."/>
            <person name="Plunkett G. III"/>
            <person name="Redford P."/>
            <person name="Roesch P."/>
            <person name="Rasko D."/>
            <person name="Buckles E.L."/>
            <person name="Liou S.-R."/>
            <person name="Boutin A."/>
            <person name="Hackett J."/>
            <person name="Stroud D."/>
            <person name="Mayhew G.F."/>
            <person name="Rose D.J."/>
            <person name="Zhou S."/>
            <person name="Schwartz D.C."/>
            <person name="Perna N.T."/>
            <person name="Mobley H.L.T."/>
            <person name="Donnenberg M.S."/>
            <person name="Blattner F.R."/>
        </authorList>
    </citation>
    <scope>NUCLEOTIDE SEQUENCE [LARGE SCALE GENOMIC DNA]</scope>
    <source>
        <strain>CFT073 / ATCC 700928 / UPEC</strain>
    </source>
</reference>
<dbReference type="EC" id="2.7.1.50" evidence="1"/>
<dbReference type="EMBL" id="AE014075">
    <property type="protein sequence ID" value="AAN81087.1"/>
    <property type="molecule type" value="Genomic_DNA"/>
</dbReference>
<dbReference type="RefSeq" id="WP_001195613.1">
    <property type="nucleotide sequence ID" value="NZ_CP051263.1"/>
</dbReference>
<dbReference type="SMR" id="Q8FFY0"/>
<dbReference type="STRING" id="199310.c2631"/>
<dbReference type="KEGG" id="ecc:c2631"/>
<dbReference type="eggNOG" id="COG2145">
    <property type="taxonomic scope" value="Bacteria"/>
</dbReference>
<dbReference type="HOGENOM" id="CLU_019943_0_1_6"/>
<dbReference type="BioCyc" id="ECOL199310:C2631-MONOMER"/>
<dbReference type="UniPathway" id="UPA00060">
    <property type="reaction ID" value="UER00139"/>
</dbReference>
<dbReference type="Proteomes" id="UP000001410">
    <property type="component" value="Chromosome"/>
</dbReference>
<dbReference type="GO" id="GO:0005524">
    <property type="term" value="F:ATP binding"/>
    <property type="evidence" value="ECO:0007669"/>
    <property type="project" value="UniProtKB-UniRule"/>
</dbReference>
<dbReference type="GO" id="GO:0004417">
    <property type="term" value="F:hydroxyethylthiazole kinase activity"/>
    <property type="evidence" value="ECO:0007669"/>
    <property type="project" value="UniProtKB-UniRule"/>
</dbReference>
<dbReference type="GO" id="GO:0000287">
    <property type="term" value="F:magnesium ion binding"/>
    <property type="evidence" value="ECO:0007669"/>
    <property type="project" value="UniProtKB-UniRule"/>
</dbReference>
<dbReference type="GO" id="GO:0009228">
    <property type="term" value="P:thiamine biosynthetic process"/>
    <property type="evidence" value="ECO:0007669"/>
    <property type="project" value="UniProtKB-KW"/>
</dbReference>
<dbReference type="GO" id="GO:0009229">
    <property type="term" value="P:thiamine diphosphate biosynthetic process"/>
    <property type="evidence" value="ECO:0007669"/>
    <property type="project" value="UniProtKB-UniRule"/>
</dbReference>
<dbReference type="CDD" id="cd01170">
    <property type="entry name" value="THZ_kinase"/>
    <property type="match status" value="1"/>
</dbReference>
<dbReference type="FunFam" id="3.40.1190.20:FF:000015">
    <property type="entry name" value="Hydroxyethylthiazole kinase"/>
    <property type="match status" value="1"/>
</dbReference>
<dbReference type="Gene3D" id="3.40.1190.20">
    <property type="match status" value="1"/>
</dbReference>
<dbReference type="HAMAP" id="MF_00228">
    <property type="entry name" value="Thz_kinase"/>
    <property type="match status" value="1"/>
</dbReference>
<dbReference type="InterPro" id="IPR000417">
    <property type="entry name" value="Hyethyz_kinase"/>
</dbReference>
<dbReference type="InterPro" id="IPR029056">
    <property type="entry name" value="Ribokinase-like"/>
</dbReference>
<dbReference type="NCBIfam" id="NF006830">
    <property type="entry name" value="PRK09355.1"/>
    <property type="match status" value="1"/>
</dbReference>
<dbReference type="NCBIfam" id="TIGR00694">
    <property type="entry name" value="thiM"/>
    <property type="match status" value="1"/>
</dbReference>
<dbReference type="Pfam" id="PF02110">
    <property type="entry name" value="HK"/>
    <property type="match status" value="1"/>
</dbReference>
<dbReference type="PIRSF" id="PIRSF000513">
    <property type="entry name" value="Thz_kinase"/>
    <property type="match status" value="1"/>
</dbReference>
<dbReference type="PRINTS" id="PR01099">
    <property type="entry name" value="HYETHTZKNASE"/>
</dbReference>
<dbReference type="SUPFAM" id="SSF53613">
    <property type="entry name" value="Ribokinase-like"/>
    <property type="match status" value="1"/>
</dbReference>
<organism>
    <name type="scientific">Escherichia coli O6:H1 (strain CFT073 / ATCC 700928 / UPEC)</name>
    <dbReference type="NCBI Taxonomy" id="199310"/>
    <lineage>
        <taxon>Bacteria</taxon>
        <taxon>Pseudomonadati</taxon>
        <taxon>Pseudomonadota</taxon>
        <taxon>Gammaproteobacteria</taxon>
        <taxon>Enterobacterales</taxon>
        <taxon>Enterobacteriaceae</taxon>
        <taxon>Escherichia</taxon>
    </lineage>
</organism>
<name>THIM_ECOL6</name>
<protein>
    <recommendedName>
        <fullName evidence="1">Hydroxyethylthiazole kinase</fullName>
        <ecNumber evidence="1">2.7.1.50</ecNumber>
    </recommendedName>
    <alternativeName>
        <fullName evidence="1">4-methyl-5-beta-hydroxyethylthiazole kinase</fullName>
        <shortName evidence="1">TH kinase</shortName>
        <shortName evidence="1">Thz kinase</shortName>
    </alternativeName>
</protein>
<evidence type="ECO:0000255" key="1">
    <source>
        <dbReference type="HAMAP-Rule" id="MF_00228"/>
    </source>
</evidence>
<feature type="chain" id="PRO_0000156934" description="Hydroxyethylthiazole kinase">
    <location>
        <begin position="1"/>
        <end position="262"/>
    </location>
</feature>
<feature type="binding site" evidence="1">
    <location>
        <position position="50"/>
    </location>
    <ligand>
        <name>substrate</name>
    </ligand>
</feature>
<feature type="binding site" evidence="1">
    <location>
        <position position="125"/>
    </location>
    <ligand>
        <name>ATP</name>
        <dbReference type="ChEBI" id="CHEBI:30616"/>
    </ligand>
</feature>
<feature type="binding site" evidence="1">
    <location>
        <position position="171"/>
    </location>
    <ligand>
        <name>ATP</name>
        <dbReference type="ChEBI" id="CHEBI:30616"/>
    </ligand>
</feature>
<feature type="binding site" evidence="1">
    <location>
        <position position="198"/>
    </location>
    <ligand>
        <name>substrate</name>
    </ligand>
</feature>
<comment type="function">
    <text evidence="1">Catalyzes the phosphorylation of the hydroxyl group of 4-methyl-5-beta-hydroxyethylthiazole (THZ).</text>
</comment>
<comment type="catalytic activity">
    <reaction evidence="1">
        <text>5-(2-hydroxyethyl)-4-methylthiazole + ATP = 4-methyl-5-(2-phosphooxyethyl)-thiazole + ADP + H(+)</text>
        <dbReference type="Rhea" id="RHEA:24212"/>
        <dbReference type="ChEBI" id="CHEBI:15378"/>
        <dbReference type="ChEBI" id="CHEBI:17957"/>
        <dbReference type="ChEBI" id="CHEBI:30616"/>
        <dbReference type="ChEBI" id="CHEBI:58296"/>
        <dbReference type="ChEBI" id="CHEBI:456216"/>
        <dbReference type="EC" id="2.7.1.50"/>
    </reaction>
</comment>
<comment type="cofactor">
    <cofactor evidence="1">
        <name>Mg(2+)</name>
        <dbReference type="ChEBI" id="CHEBI:18420"/>
    </cofactor>
</comment>
<comment type="pathway">
    <text evidence="1">Cofactor biosynthesis; thiamine diphosphate biosynthesis; 4-methyl-5-(2-phosphoethyl)-thiazole from 5-(2-hydroxyethyl)-4-methylthiazole: step 1/1.</text>
</comment>
<comment type="similarity">
    <text evidence="1">Belongs to the Thz kinase family.</text>
</comment>
<proteinExistence type="inferred from homology"/>
<sequence length="262" mass="27281">MQVDLLSSAQSAHALHLFHQHSPLVHCMTNDVVQTFTANTLLALGASPAMVIETEEASQFAAIASALLINVGTLTQPRAQAMSAAVEQATRSQTPWTLDPVAVGALDYRRRFCVELLSHKPTAIRGNASEIMALAGVANGGRGVDTTDAAANAIPAAQTLARETGAIVVVTGEVDYVTDGHRIIGIHGGDPLMTKVVGTGCALSAVVAACCALPGDTLENIASACHWMKQAGERAVARSEGPGSFVPHFLDALWQLAQEVQA</sequence>
<keyword id="KW-0067">ATP-binding</keyword>
<keyword id="KW-0418">Kinase</keyword>
<keyword id="KW-0460">Magnesium</keyword>
<keyword id="KW-0479">Metal-binding</keyword>
<keyword id="KW-0547">Nucleotide-binding</keyword>
<keyword id="KW-1185">Reference proteome</keyword>
<keyword id="KW-0784">Thiamine biosynthesis</keyword>
<keyword id="KW-0808">Transferase</keyword>
<accession>Q8FFY0</accession>
<gene>
    <name evidence="1" type="primary">thiM</name>
    <name type="ordered locus">c2631</name>
</gene>